<organism>
    <name type="scientific">Bacillus pumilus (strain SAFR-032)</name>
    <dbReference type="NCBI Taxonomy" id="315750"/>
    <lineage>
        <taxon>Bacteria</taxon>
        <taxon>Bacillati</taxon>
        <taxon>Bacillota</taxon>
        <taxon>Bacilli</taxon>
        <taxon>Bacillales</taxon>
        <taxon>Bacillaceae</taxon>
        <taxon>Bacillus</taxon>
    </lineage>
</organism>
<name>FMT_BACP2</name>
<reference key="1">
    <citation type="journal article" date="2007" name="PLoS ONE">
        <title>Paradoxical DNA repair and peroxide resistance gene conservation in Bacillus pumilus SAFR-032.</title>
        <authorList>
            <person name="Gioia J."/>
            <person name="Yerrapragada S."/>
            <person name="Qin X."/>
            <person name="Jiang H."/>
            <person name="Igboeli O.C."/>
            <person name="Muzny D."/>
            <person name="Dugan-Rocha S."/>
            <person name="Ding Y."/>
            <person name="Hawes A."/>
            <person name="Liu W."/>
            <person name="Perez L."/>
            <person name="Kovar C."/>
            <person name="Dinh H."/>
            <person name="Lee S."/>
            <person name="Nazareth L."/>
            <person name="Blyth P."/>
            <person name="Holder M."/>
            <person name="Buhay C."/>
            <person name="Tirumalai M.R."/>
            <person name="Liu Y."/>
            <person name="Dasgupta I."/>
            <person name="Bokhetache L."/>
            <person name="Fujita M."/>
            <person name="Karouia F."/>
            <person name="Eswara Moorthy P."/>
            <person name="Siefert J."/>
            <person name="Uzman A."/>
            <person name="Buzumbo P."/>
            <person name="Verma A."/>
            <person name="Zwiya H."/>
            <person name="McWilliams B.D."/>
            <person name="Olowu A."/>
            <person name="Clinkenbeard K.D."/>
            <person name="Newcombe D."/>
            <person name="Golebiewski L."/>
            <person name="Petrosino J.F."/>
            <person name="Nicholson W.L."/>
            <person name="Fox G.E."/>
            <person name="Venkateswaran K."/>
            <person name="Highlander S.K."/>
            <person name="Weinstock G.M."/>
        </authorList>
    </citation>
    <scope>NUCLEOTIDE SEQUENCE [LARGE SCALE GENOMIC DNA]</scope>
    <source>
        <strain>SAFR-032</strain>
    </source>
</reference>
<feature type="chain" id="PRO_1000058396" description="Methionyl-tRNA formyltransferase">
    <location>
        <begin position="1"/>
        <end position="317"/>
    </location>
</feature>
<feature type="binding site" evidence="1">
    <location>
        <begin position="110"/>
        <end position="113"/>
    </location>
    <ligand>
        <name>(6S)-5,6,7,8-tetrahydrofolate</name>
        <dbReference type="ChEBI" id="CHEBI:57453"/>
    </ligand>
</feature>
<accession>A8FD38</accession>
<dbReference type="EC" id="2.1.2.9" evidence="1"/>
<dbReference type="EMBL" id="CP000813">
    <property type="protein sequence ID" value="ABV62155.1"/>
    <property type="molecule type" value="Genomic_DNA"/>
</dbReference>
<dbReference type="RefSeq" id="WP_012009915.1">
    <property type="nucleotide sequence ID" value="NC_009848.4"/>
</dbReference>
<dbReference type="SMR" id="A8FD38"/>
<dbReference type="STRING" id="315750.BPUM_1472"/>
<dbReference type="GeneID" id="5620735"/>
<dbReference type="KEGG" id="bpu:BPUM_1472"/>
<dbReference type="eggNOG" id="COG0223">
    <property type="taxonomic scope" value="Bacteria"/>
</dbReference>
<dbReference type="HOGENOM" id="CLU_033347_1_1_9"/>
<dbReference type="OrthoDB" id="9802815at2"/>
<dbReference type="Proteomes" id="UP000001355">
    <property type="component" value="Chromosome"/>
</dbReference>
<dbReference type="GO" id="GO:0005829">
    <property type="term" value="C:cytosol"/>
    <property type="evidence" value="ECO:0007669"/>
    <property type="project" value="TreeGrafter"/>
</dbReference>
<dbReference type="GO" id="GO:0004479">
    <property type="term" value="F:methionyl-tRNA formyltransferase activity"/>
    <property type="evidence" value="ECO:0007669"/>
    <property type="project" value="UniProtKB-UniRule"/>
</dbReference>
<dbReference type="CDD" id="cd08646">
    <property type="entry name" value="FMT_core_Met-tRNA-FMT_N"/>
    <property type="match status" value="1"/>
</dbReference>
<dbReference type="CDD" id="cd08704">
    <property type="entry name" value="Met_tRNA_FMT_C"/>
    <property type="match status" value="1"/>
</dbReference>
<dbReference type="FunFam" id="3.40.50.12230:FF:000001">
    <property type="entry name" value="Methionyl-tRNA formyltransferase"/>
    <property type="match status" value="1"/>
</dbReference>
<dbReference type="FunFam" id="3.40.50.170:FF:000004">
    <property type="entry name" value="Methionyl-tRNA formyltransferase"/>
    <property type="match status" value="1"/>
</dbReference>
<dbReference type="Gene3D" id="3.10.25.10">
    <property type="entry name" value="Formyl transferase, C-terminal domain"/>
    <property type="match status" value="1"/>
</dbReference>
<dbReference type="Gene3D" id="3.40.50.170">
    <property type="entry name" value="Formyl transferase, N-terminal domain"/>
    <property type="match status" value="1"/>
</dbReference>
<dbReference type="HAMAP" id="MF_00182">
    <property type="entry name" value="Formyl_trans"/>
    <property type="match status" value="1"/>
</dbReference>
<dbReference type="InterPro" id="IPR005794">
    <property type="entry name" value="Fmt"/>
</dbReference>
<dbReference type="InterPro" id="IPR005793">
    <property type="entry name" value="Formyl_trans_C"/>
</dbReference>
<dbReference type="InterPro" id="IPR037022">
    <property type="entry name" value="Formyl_trans_C_sf"/>
</dbReference>
<dbReference type="InterPro" id="IPR002376">
    <property type="entry name" value="Formyl_transf_N"/>
</dbReference>
<dbReference type="InterPro" id="IPR036477">
    <property type="entry name" value="Formyl_transf_N_sf"/>
</dbReference>
<dbReference type="InterPro" id="IPR011034">
    <property type="entry name" value="Formyl_transferase-like_C_sf"/>
</dbReference>
<dbReference type="InterPro" id="IPR001555">
    <property type="entry name" value="GART_AS"/>
</dbReference>
<dbReference type="InterPro" id="IPR044135">
    <property type="entry name" value="Met-tRNA-FMT_C"/>
</dbReference>
<dbReference type="InterPro" id="IPR041711">
    <property type="entry name" value="Met-tRNA-FMT_N"/>
</dbReference>
<dbReference type="NCBIfam" id="TIGR00460">
    <property type="entry name" value="fmt"/>
    <property type="match status" value="1"/>
</dbReference>
<dbReference type="PANTHER" id="PTHR11138">
    <property type="entry name" value="METHIONYL-TRNA FORMYLTRANSFERASE"/>
    <property type="match status" value="1"/>
</dbReference>
<dbReference type="PANTHER" id="PTHR11138:SF5">
    <property type="entry name" value="METHIONYL-TRNA FORMYLTRANSFERASE, MITOCHONDRIAL"/>
    <property type="match status" value="1"/>
</dbReference>
<dbReference type="Pfam" id="PF02911">
    <property type="entry name" value="Formyl_trans_C"/>
    <property type="match status" value="1"/>
</dbReference>
<dbReference type="Pfam" id="PF00551">
    <property type="entry name" value="Formyl_trans_N"/>
    <property type="match status" value="1"/>
</dbReference>
<dbReference type="SUPFAM" id="SSF50486">
    <property type="entry name" value="FMT C-terminal domain-like"/>
    <property type="match status" value="1"/>
</dbReference>
<dbReference type="SUPFAM" id="SSF53328">
    <property type="entry name" value="Formyltransferase"/>
    <property type="match status" value="1"/>
</dbReference>
<dbReference type="PROSITE" id="PS00373">
    <property type="entry name" value="GART"/>
    <property type="match status" value="1"/>
</dbReference>
<sequence>MARIVFMGTPDFSVPVLQTLITEGYEVVGVVTQPDRPKGRKRVLTPPPVKVEALKHGIPVLQPEKVRLDEEIDKVLALKPDLIVTAAFGQILPKRLLDEPQFGCINVHASLLPELRGGAPIHYAILQGKKKTGVTIMYMVERLDAGDMISKVEVEIDELDNVGTLHDKLSVAGAALLKDTVPNVLSGSISPIPQNEDAATYAPNIKREQERLDWTKTGEELYNQVRGLNPWPVAYTEWNGAHLKVWEAKKVPLEVQEEAGKVIELQKEGPVIGTGNKQGLLLTGVQPAGKKKMSGEDFLRGANIEIGQKLGLMNEEK</sequence>
<protein>
    <recommendedName>
        <fullName evidence="1">Methionyl-tRNA formyltransferase</fullName>
        <ecNumber evidence="1">2.1.2.9</ecNumber>
    </recommendedName>
</protein>
<gene>
    <name evidence="1" type="primary">fmt</name>
    <name type="ordered locus">BPUM_1472</name>
</gene>
<keyword id="KW-0648">Protein biosynthesis</keyword>
<keyword id="KW-0808">Transferase</keyword>
<proteinExistence type="inferred from homology"/>
<evidence type="ECO:0000255" key="1">
    <source>
        <dbReference type="HAMAP-Rule" id="MF_00182"/>
    </source>
</evidence>
<comment type="function">
    <text evidence="1">Attaches a formyl group to the free amino group of methionyl-tRNA(fMet). The formyl group appears to play a dual role in the initiator identity of N-formylmethionyl-tRNA by promoting its recognition by IF2 and preventing the misappropriation of this tRNA by the elongation apparatus.</text>
</comment>
<comment type="catalytic activity">
    <reaction evidence="1">
        <text>L-methionyl-tRNA(fMet) + (6R)-10-formyltetrahydrofolate = N-formyl-L-methionyl-tRNA(fMet) + (6S)-5,6,7,8-tetrahydrofolate + H(+)</text>
        <dbReference type="Rhea" id="RHEA:24380"/>
        <dbReference type="Rhea" id="RHEA-COMP:9952"/>
        <dbReference type="Rhea" id="RHEA-COMP:9953"/>
        <dbReference type="ChEBI" id="CHEBI:15378"/>
        <dbReference type="ChEBI" id="CHEBI:57453"/>
        <dbReference type="ChEBI" id="CHEBI:78530"/>
        <dbReference type="ChEBI" id="CHEBI:78844"/>
        <dbReference type="ChEBI" id="CHEBI:195366"/>
        <dbReference type="EC" id="2.1.2.9"/>
    </reaction>
</comment>
<comment type="similarity">
    <text evidence="1">Belongs to the Fmt family.</text>
</comment>